<comment type="function">
    <text evidence="3">Flavonoid 3-O-methyltransferase involved in the biosynthesis of polymethoxylated flavonoids natural products such as myricetin derivatives, aroma compounds possessing antioxidant properties and exhibiting pharmacological activities such as anti-carcinogen, anti-viral, anti-thrombotic, anti-diabetic, anti-atherosclerotic, and anti-inflammatory effects (PubMed:22711283). Catalyzes S-adenosylmethionine-dependent regioselective 3-O-methylation of flavonoids; active on various hydroxylated flavonoid substrates (PubMed:22711283). Active with myricetin, quercetin, kaempferol, 4'-methyl kaempferol (kaempferide), 3'-methyl quercetin (isorhamnetin), 7-methyl quercetin (rhamnetin), 3'-methyl myricetin (laricitrin) and 3',5'-dimethyl myricetin (syringetin), thus producing 3-methyl myricetin, 3-methyl quercetin, 3-methyl kaempferol, 4',3-methyl kaempferol, 3',3-methyl quercetin, 7,3-dimethyl quercetin, 3',3-dimethyl myricetin and 3',5',3-dimethyl myricetin, respectively (PubMed:22711283). Inactive with flavonol substrates methylated at the 3-hydroxyl position such as 3-O-methyl quercetin (PubMed:22711283).</text>
</comment>
<comment type="catalytic activity">
    <reaction evidence="3">
        <text>kaempferol + S-adenosyl-L-methionine = 3-O-methylkaempferol + S-adenosyl-L-homocysteine + H(+)</text>
        <dbReference type="Rhea" id="RHEA:74743"/>
        <dbReference type="ChEBI" id="CHEBI:15378"/>
        <dbReference type="ChEBI" id="CHEBI:57856"/>
        <dbReference type="ChEBI" id="CHEBI:58573"/>
        <dbReference type="ChEBI" id="CHEBI:59789"/>
        <dbReference type="ChEBI" id="CHEBI:194073"/>
    </reaction>
    <physiologicalReaction direction="left-to-right" evidence="3">
        <dbReference type="Rhea" id="RHEA:74744"/>
    </physiologicalReaction>
</comment>
<comment type="catalytic activity">
    <reaction evidence="3">
        <text>quercetin + S-adenosyl-L-methionine = 3',4',5,7-tetrahydroxy-3-methoxyflavone + S-adenosyl-L-homocysteine + H(+)</text>
        <dbReference type="Rhea" id="RHEA:17673"/>
        <dbReference type="ChEBI" id="CHEBI:15378"/>
        <dbReference type="ChEBI" id="CHEBI:57694"/>
        <dbReference type="ChEBI" id="CHEBI:57856"/>
        <dbReference type="ChEBI" id="CHEBI:57928"/>
        <dbReference type="ChEBI" id="CHEBI:59789"/>
        <dbReference type="EC" id="2.1.1.76"/>
    </reaction>
    <physiologicalReaction direction="left-to-right" evidence="3">
        <dbReference type="Rhea" id="RHEA:17674"/>
    </physiologicalReaction>
</comment>
<comment type="catalytic activity">
    <reaction evidence="3">
        <text>myricetin + S-adenosyl-L-methionine = 3-O-methylmyricetin + S-adenosyl-L-homocysteine + H(+)</text>
        <dbReference type="Rhea" id="RHEA:74747"/>
        <dbReference type="ChEBI" id="CHEBI:15378"/>
        <dbReference type="ChEBI" id="CHEBI:57856"/>
        <dbReference type="ChEBI" id="CHEBI:58395"/>
        <dbReference type="ChEBI" id="CHEBI:59789"/>
        <dbReference type="ChEBI" id="CHEBI:194072"/>
    </reaction>
    <physiologicalReaction direction="left-to-right" evidence="3">
        <dbReference type="Rhea" id="RHEA:74748"/>
    </physiologicalReaction>
</comment>
<comment type="catalytic activity">
    <reaction evidence="3">
        <text>kaempferide + S-adenosyl-L-methionine = 3,4'-O-dimethylkaempferol + S-adenosyl-L-homocysteine + H(+)</text>
        <dbReference type="Rhea" id="RHEA:74755"/>
        <dbReference type="ChEBI" id="CHEBI:15378"/>
        <dbReference type="ChEBI" id="CHEBI:57856"/>
        <dbReference type="ChEBI" id="CHEBI:58925"/>
        <dbReference type="ChEBI" id="CHEBI:59789"/>
        <dbReference type="ChEBI" id="CHEBI:194074"/>
    </reaction>
    <physiologicalReaction direction="left-to-right" evidence="3">
        <dbReference type="Rhea" id="RHEA:74756"/>
    </physiologicalReaction>
</comment>
<comment type="catalytic activity">
    <reaction evidence="3">
        <text>isorhamnetin + S-adenosyl-L-methionine = 3,3'-O-dimethylquercetin + S-adenosyl-L-homocysteine + H(+)</text>
        <dbReference type="Rhea" id="RHEA:74759"/>
        <dbReference type="ChEBI" id="CHEBI:15378"/>
        <dbReference type="ChEBI" id="CHEBI:57856"/>
        <dbReference type="ChEBI" id="CHEBI:59789"/>
        <dbReference type="ChEBI" id="CHEBI:144055"/>
        <dbReference type="ChEBI" id="CHEBI:194063"/>
    </reaction>
    <physiologicalReaction direction="left-to-right" evidence="3">
        <dbReference type="Rhea" id="RHEA:74760"/>
    </physiologicalReaction>
</comment>
<comment type="catalytic activity">
    <reaction evidence="3">
        <text>rhamnetin + S-adenosyl-L-methionine = 3',4',5-trihydroxy-3,7-dimethoxyflavone + S-adenosyl-L-homocysteine + H(+)</text>
        <dbReference type="Rhea" id="RHEA:74763"/>
        <dbReference type="ChEBI" id="CHEBI:15378"/>
        <dbReference type="ChEBI" id="CHEBI:57856"/>
        <dbReference type="ChEBI" id="CHEBI:59789"/>
        <dbReference type="ChEBI" id="CHEBI:77710"/>
        <dbReference type="ChEBI" id="CHEBI:192706"/>
    </reaction>
    <physiologicalReaction direction="left-to-right" evidence="3">
        <dbReference type="Rhea" id="RHEA:74764"/>
    </physiologicalReaction>
</comment>
<comment type="catalytic activity">
    <reaction evidence="3">
        <text>laricitrin + S-adenosyl-L-methionine = 3,3'-O-dimethylmyricetin + S-adenosyl-L-homocysteine + H(+)</text>
        <dbReference type="Rhea" id="RHEA:74779"/>
        <dbReference type="ChEBI" id="CHEBI:15378"/>
        <dbReference type="ChEBI" id="CHEBI:57856"/>
        <dbReference type="ChEBI" id="CHEBI:59789"/>
        <dbReference type="ChEBI" id="CHEBI:60006"/>
        <dbReference type="ChEBI" id="CHEBI:194066"/>
    </reaction>
    <physiologicalReaction direction="left-to-right" evidence="3">
        <dbReference type="Rhea" id="RHEA:74780"/>
    </physiologicalReaction>
</comment>
<comment type="catalytic activity">
    <reaction evidence="3">
        <text>syringetin + S-adenosyl-L-methionine = 3,3',5'-O-trimethylmyricetin + S-adenosyl-L-homocysteine + H(+)</text>
        <dbReference type="Rhea" id="RHEA:74767"/>
        <dbReference type="ChEBI" id="CHEBI:15378"/>
        <dbReference type="ChEBI" id="CHEBI:57856"/>
        <dbReference type="ChEBI" id="CHEBI:58412"/>
        <dbReference type="ChEBI" id="CHEBI:59789"/>
        <dbReference type="ChEBI" id="CHEBI:194075"/>
    </reaction>
    <physiologicalReaction direction="left-to-right" evidence="3">
        <dbReference type="Rhea" id="RHEA:74768"/>
    </physiologicalReaction>
</comment>
<comment type="biophysicochemical properties">
    <kinetics>
        <KM evidence="3">0.55 uM for myricetin (in the presence of S-adenosylmethionine)</KM>
        <KM evidence="3">2.07 uM for 3'-methyl myricetin (in the presence of S-adenosylmethionine)</KM>
        <KM evidence="3">9.98 uM for 7-methyl quercetin (in the presence of S-adenosylmethionine)</KM>
        <KM evidence="3">0.55 uM for S-adenosyl-L-methionine (in the presence of myricetin)</KM>
        <text evidence="3">kcat is 0.82 sec(-1) with myricetin as substrate (in the presence of S-adenosylmethionine) (PubMed:22711283). kcat is 1.66 sec(-1) with 3'-methyl myricetin as substrate (in the presence of S-adenosylmethionine) (PubMed:22711283). kcat is 0.39 sec(-1) with 7-methyl quercetin as substrate (in the presence of S-adenosylmethionine) (PubMed:22711283). kcat is 2.94 sec(-1) with S-adenosyl-L-methionine as substrate (in the presence of myricetin) (PubMed:22711283).</text>
    </kinetics>
</comment>
<comment type="pathway">
    <text evidence="3">Flavonoid metabolism.</text>
</comment>
<comment type="subunit">
    <text evidence="1">Homodimer.</text>
</comment>
<comment type="tissue specificity">
    <text evidence="3">Mainly expressed in leaves secreting glandular trichomes types 1 and 4 and, to a lesser extent, in storage trichomes type 6.</text>
</comment>
<comment type="similarity">
    <text evidence="2">Belongs to the class I-like SAM-binding methyltransferase superfamily. Cation-independent O-methyltransferase family.</text>
</comment>
<accession>M9Z1G5</accession>
<name>MOMT3_SOLHA</name>
<keyword id="KW-0489">Methyltransferase</keyword>
<keyword id="KW-0949">S-adenosyl-L-methionine</keyword>
<keyword id="KW-0808">Transferase</keyword>
<organism>
    <name type="scientific">Solanum habrochaites</name>
    <name type="common">Wild tomato</name>
    <name type="synonym">Lycopersicon hirsutum</name>
    <dbReference type="NCBI Taxonomy" id="62890"/>
    <lineage>
        <taxon>Eukaryota</taxon>
        <taxon>Viridiplantae</taxon>
        <taxon>Streptophyta</taxon>
        <taxon>Embryophyta</taxon>
        <taxon>Tracheophyta</taxon>
        <taxon>Spermatophyta</taxon>
        <taxon>Magnoliopsida</taxon>
        <taxon>eudicotyledons</taxon>
        <taxon>Gunneridae</taxon>
        <taxon>Pentapetalae</taxon>
        <taxon>asterids</taxon>
        <taxon>lamiids</taxon>
        <taxon>Solanales</taxon>
        <taxon>Solanaceae</taxon>
        <taxon>Solanoideae</taxon>
        <taxon>Solaneae</taxon>
        <taxon>Solanum</taxon>
        <taxon>Solanum subgen. Lycopersicon</taxon>
    </lineage>
</organism>
<feature type="chain" id="PRO_0000457371" description="Myricetin 3-O-methyltransferase 3">
    <location>
        <begin position="1"/>
        <end position="361"/>
    </location>
</feature>
<feature type="active site" description="Proton acceptor" evidence="2">
    <location>
        <position position="267"/>
    </location>
</feature>
<feature type="binding site" evidence="2">
    <location>
        <position position="229"/>
    </location>
    <ligand>
        <name>S-adenosyl-L-methionine</name>
        <dbReference type="ChEBI" id="CHEBI:59789"/>
    </ligand>
</feature>
<dbReference type="EC" id="2.1.1.-" evidence="2 3"/>
<dbReference type="EC" id="2.1.1.76" evidence="2 3"/>
<dbReference type="EMBL" id="KC513419">
    <property type="protein sequence ID" value="AGK26768.1"/>
    <property type="molecule type" value="mRNA"/>
</dbReference>
<dbReference type="SMR" id="M9Z1G5"/>
<dbReference type="GO" id="GO:0102449">
    <property type="term" value="F:kaempferol 3-O-methyltransferase activity"/>
    <property type="evidence" value="ECO:0000314"/>
    <property type="project" value="UniProtKB"/>
</dbReference>
<dbReference type="GO" id="GO:0008171">
    <property type="term" value="F:O-methyltransferase activity"/>
    <property type="evidence" value="ECO:0007669"/>
    <property type="project" value="InterPro"/>
</dbReference>
<dbReference type="GO" id="GO:0046983">
    <property type="term" value="F:protein dimerization activity"/>
    <property type="evidence" value="ECO:0007669"/>
    <property type="project" value="InterPro"/>
</dbReference>
<dbReference type="GO" id="GO:0030755">
    <property type="term" value="F:quercetin 3-O-methyltransferase activity"/>
    <property type="evidence" value="ECO:0000314"/>
    <property type="project" value="UniProtKB"/>
</dbReference>
<dbReference type="GO" id="GO:0009813">
    <property type="term" value="P:flavonoid biosynthetic process"/>
    <property type="evidence" value="ECO:0000314"/>
    <property type="project" value="UniProtKB"/>
</dbReference>
<dbReference type="GO" id="GO:0032259">
    <property type="term" value="P:methylation"/>
    <property type="evidence" value="ECO:0007669"/>
    <property type="project" value="UniProtKB-KW"/>
</dbReference>
<dbReference type="CDD" id="cd02440">
    <property type="entry name" value="AdoMet_MTases"/>
    <property type="match status" value="1"/>
</dbReference>
<dbReference type="FunFam" id="1.10.10.10:FF:000357">
    <property type="entry name" value="Caffeic acid 3-O-methyltransferase"/>
    <property type="match status" value="1"/>
</dbReference>
<dbReference type="FunFam" id="3.40.50.150:FF:000061">
    <property type="entry name" value="Caffeic acid O-methyltransferase"/>
    <property type="match status" value="1"/>
</dbReference>
<dbReference type="Gene3D" id="3.40.50.150">
    <property type="entry name" value="Vaccinia Virus protein VP39"/>
    <property type="match status" value="1"/>
</dbReference>
<dbReference type="Gene3D" id="1.10.10.10">
    <property type="entry name" value="Winged helix-like DNA-binding domain superfamily/Winged helix DNA-binding domain"/>
    <property type="match status" value="1"/>
</dbReference>
<dbReference type="InterPro" id="IPR016461">
    <property type="entry name" value="COMT-like"/>
</dbReference>
<dbReference type="InterPro" id="IPR001077">
    <property type="entry name" value="O_MeTrfase_dom"/>
</dbReference>
<dbReference type="InterPro" id="IPR012967">
    <property type="entry name" value="Plant_O-MeTrfase_dimerisation"/>
</dbReference>
<dbReference type="InterPro" id="IPR029063">
    <property type="entry name" value="SAM-dependent_MTases_sf"/>
</dbReference>
<dbReference type="InterPro" id="IPR036388">
    <property type="entry name" value="WH-like_DNA-bd_sf"/>
</dbReference>
<dbReference type="InterPro" id="IPR036390">
    <property type="entry name" value="WH_DNA-bd_sf"/>
</dbReference>
<dbReference type="PANTHER" id="PTHR11746">
    <property type="entry name" value="O-METHYLTRANSFERASE"/>
    <property type="match status" value="1"/>
</dbReference>
<dbReference type="Pfam" id="PF08100">
    <property type="entry name" value="Dimerisation"/>
    <property type="match status" value="1"/>
</dbReference>
<dbReference type="Pfam" id="PF00891">
    <property type="entry name" value="Methyltransf_2"/>
    <property type="match status" value="1"/>
</dbReference>
<dbReference type="PIRSF" id="PIRSF005739">
    <property type="entry name" value="O-mtase"/>
    <property type="match status" value="1"/>
</dbReference>
<dbReference type="SUPFAM" id="SSF53335">
    <property type="entry name" value="S-adenosyl-L-methionine-dependent methyltransferases"/>
    <property type="match status" value="1"/>
</dbReference>
<dbReference type="SUPFAM" id="SSF46785">
    <property type="entry name" value="Winged helix' DNA-binding domain"/>
    <property type="match status" value="1"/>
</dbReference>
<dbReference type="PROSITE" id="PS51683">
    <property type="entry name" value="SAM_OMT_II"/>
    <property type="match status" value="1"/>
</dbReference>
<proteinExistence type="evidence at protein level"/>
<protein>
    <recommendedName>
        <fullName evidence="4">Myricetin 3-O-methyltransferase 3</fullName>
        <shortName evidence="4">ShMOMT3</shortName>
        <ecNumber evidence="2 3">2.1.1.-</ecNumber>
    </recommendedName>
    <alternativeName>
        <fullName evidence="6">3',5'-dimethyl myricetin 3-O-methyltransferase</fullName>
        <shortName evidence="5">Syringetin 3-O-methyltransferase</shortName>
        <ecNumber evidence="2 3">2.1.1.-</ecNumber>
    </alternativeName>
    <alternativeName>
        <fullName evidence="6">3'-methyl myricetin 3-O-methyltransferase</fullName>
        <shortName evidence="5">Laricitrin 3-O-methyltransferase</shortName>
        <ecNumber evidence="2 3">2.1.1.-</ecNumber>
    </alternativeName>
    <alternativeName>
        <fullName evidence="6">3'-methyl quercetin 3-O-methyltransferase</fullName>
        <shortName evidence="5">Isorhamnetin 3-O-methyltransferase</shortName>
        <ecNumber evidence="2 3">2.1.1.-</ecNumber>
    </alternativeName>
    <alternativeName>
        <fullName evidence="6">4'-methyl kaempferol 3-O-methyltransferase</fullName>
        <shortName evidence="5">Kaempferide 3-O-methyltransferase</shortName>
        <ecNumber evidence="2 3">2.1.1.-</ecNumber>
    </alternativeName>
    <alternativeName>
        <fullName evidence="6">7-methyl quercetin 3-O-methyltransferase</fullName>
        <shortName evidence="5">Rhamnetin 3-O-methyltransferase</shortName>
        <ecNumber evidence="2 3">2.1.1.-</ecNumber>
    </alternativeName>
    <alternativeName>
        <fullName evidence="6">Kaempferol 3-O-methyltransferase</fullName>
        <ecNumber evidence="2 3">2.1.1.-</ecNumber>
    </alternativeName>
    <alternativeName>
        <fullName evidence="6">Quercetin 3-O-methyltransferase</fullName>
        <ecNumber evidence="2 3">2.1.1.76</ecNumber>
    </alternativeName>
</protein>
<evidence type="ECO:0000250" key="1">
    <source>
        <dbReference type="UniProtKB" id="Q7XB10"/>
    </source>
</evidence>
<evidence type="ECO:0000255" key="2">
    <source>
        <dbReference type="PROSITE-ProRule" id="PRU01020"/>
    </source>
</evidence>
<evidence type="ECO:0000269" key="3">
    <source>
    </source>
</evidence>
<evidence type="ECO:0000303" key="4">
    <source>
    </source>
</evidence>
<evidence type="ECO:0000305" key="5"/>
<evidence type="ECO:0000305" key="6">
    <source>
    </source>
</evidence>
<sequence length="361" mass="40609">MALSMDNIVISNEEEIYMMKAMHIPCGLYLNMVLKAAIELDLFEIIAKSTTQKLSSYEIASQIPTKNPNASSLVLERILRFLASQSFLTCNITKNDDGIVHTSYNLTPLSQSLISDKDGSSIAPFLLLATDPVAVNSWFHFKDAILEGEIPFNKAHGVHAFEYHGKDSRMNGLFNRAMQNVTCTEMKRIVECYNGFQGVKEIIDVGGGLGISLATIISKYPNIKGINFDLPHVIKDAPTYEGIEHVGGDMFKSVPQRELILLKAILHDWDDEYCVKILKNCWRALPKDGKVVVIEQMQPEYPETNLISKNSSSVDMLMMTMLDGGKERTKQQFEDLAKQAGFTVFKIVARAYYCWVIELYK</sequence>
<reference key="1">
    <citation type="journal article" date="2012" name="Planta">
        <title>Characterization of a flavonol 3-O-methyltransferase in the trichomes of the wild tomato species Solanum habrochaites.</title>
        <authorList>
            <person name="Schmidt A."/>
            <person name="Li C."/>
            <person name="Jones A.D."/>
            <person name="Pichersky E."/>
        </authorList>
    </citation>
    <scope>NUCLEOTIDE SEQUENCE [MRNA]</scope>
    <scope>FUNCTION</scope>
    <scope>CATALYTIC ACTIVITY</scope>
    <scope>PATHWAY</scope>
    <scope>BIOPHYSICOCHEMICAL PROPERTIES</scope>
    <scope>TISSUE SPECIFICITY</scope>
    <source>
        <strain>cv. LA1777</strain>
        <tissue>Trichome gland</tissue>
    </source>
</reference>
<reference key="2">
    <citation type="journal article" date="2019" name="Nat. Prod. Rep.">
        <title>Non-volatile natural products in plant glandular trichomes: chemistry, biological activities and biosynthesis.</title>
        <authorList>
            <person name="Liu Y."/>
            <person name="Jing S.-X."/>
            <person name="Luo S.-H."/>
            <person name="Li S.-H."/>
        </authorList>
    </citation>
    <scope>PATHWAY</scope>
    <scope>REVIEW</scope>
</reference>
<gene>
    <name evidence="4" type="primary">MOMT3</name>
</gene>